<evidence type="ECO:0000255" key="1">
    <source>
        <dbReference type="HAMAP-Rule" id="MF_01595"/>
    </source>
</evidence>
<evidence type="ECO:0000256" key="2">
    <source>
        <dbReference type="SAM" id="MobiDB-lite"/>
    </source>
</evidence>
<keyword id="KW-0963">Cytoplasm</keyword>
<keyword id="KW-0460">Magnesium</keyword>
<keyword id="KW-0479">Metal-binding</keyword>
<keyword id="KW-0548">Nucleotidyltransferase</keyword>
<keyword id="KW-0694">RNA-binding</keyword>
<keyword id="KW-0808">Transferase</keyword>
<dbReference type="EC" id="2.7.7.8" evidence="1"/>
<dbReference type="EMBL" id="CP001391">
    <property type="protein sequence ID" value="ACN95576.1"/>
    <property type="molecule type" value="Genomic_DNA"/>
</dbReference>
<dbReference type="RefSeq" id="WP_012673288.1">
    <property type="nucleotide sequence ID" value="NZ_MKIF01000052.1"/>
</dbReference>
<dbReference type="SMR" id="C0R3T4"/>
<dbReference type="STRING" id="66084.WRi_008390"/>
<dbReference type="KEGG" id="wri:WRi_008390"/>
<dbReference type="HOGENOM" id="CLU_004217_2_2_5"/>
<dbReference type="Proteomes" id="UP000001293">
    <property type="component" value="Chromosome"/>
</dbReference>
<dbReference type="GO" id="GO:0005829">
    <property type="term" value="C:cytosol"/>
    <property type="evidence" value="ECO:0007669"/>
    <property type="project" value="TreeGrafter"/>
</dbReference>
<dbReference type="GO" id="GO:0000175">
    <property type="term" value="F:3'-5'-RNA exonuclease activity"/>
    <property type="evidence" value="ECO:0007669"/>
    <property type="project" value="TreeGrafter"/>
</dbReference>
<dbReference type="GO" id="GO:0000287">
    <property type="term" value="F:magnesium ion binding"/>
    <property type="evidence" value="ECO:0007669"/>
    <property type="project" value="UniProtKB-UniRule"/>
</dbReference>
<dbReference type="GO" id="GO:0004654">
    <property type="term" value="F:polyribonucleotide nucleotidyltransferase activity"/>
    <property type="evidence" value="ECO:0007669"/>
    <property type="project" value="UniProtKB-UniRule"/>
</dbReference>
<dbReference type="GO" id="GO:0003723">
    <property type="term" value="F:RNA binding"/>
    <property type="evidence" value="ECO:0007669"/>
    <property type="project" value="UniProtKB-UniRule"/>
</dbReference>
<dbReference type="GO" id="GO:0006402">
    <property type="term" value="P:mRNA catabolic process"/>
    <property type="evidence" value="ECO:0007669"/>
    <property type="project" value="UniProtKB-UniRule"/>
</dbReference>
<dbReference type="GO" id="GO:0006396">
    <property type="term" value="P:RNA processing"/>
    <property type="evidence" value="ECO:0007669"/>
    <property type="project" value="InterPro"/>
</dbReference>
<dbReference type="CDD" id="cd02393">
    <property type="entry name" value="KH-I_PNPase"/>
    <property type="match status" value="1"/>
</dbReference>
<dbReference type="CDD" id="cd11363">
    <property type="entry name" value="RNase_PH_PNPase_1"/>
    <property type="match status" value="1"/>
</dbReference>
<dbReference type="CDD" id="cd11364">
    <property type="entry name" value="RNase_PH_PNPase_2"/>
    <property type="match status" value="1"/>
</dbReference>
<dbReference type="FunFam" id="3.30.1370.10:FF:000001">
    <property type="entry name" value="Polyribonucleotide nucleotidyltransferase"/>
    <property type="match status" value="1"/>
</dbReference>
<dbReference type="FunFam" id="3.30.230.70:FF:000001">
    <property type="entry name" value="Polyribonucleotide nucleotidyltransferase"/>
    <property type="match status" value="1"/>
</dbReference>
<dbReference type="FunFam" id="3.30.230.70:FF:000002">
    <property type="entry name" value="Polyribonucleotide nucleotidyltransferase"/>
    <property type="match status" value="1"/>
</dbReference>
<dbReference type="Gene3D" id="3.30.230.70">
    <property type="entry name" value="GHMP Kinase, N-terminal domain"/>
    <property type="match status" value="2"/>
</dbReference>
<dbReference type="Gene3D" id="3.30.1370.10">
    <property type="entry name" value="K Homology domain, type 1"/>
    <property type="match status" value="1"/>
</dbReference>
<dbReference type="Gene3D" id="2.40.50.140">
    <property type="entry name" value="Nucleic acid-binding proteins"/>
    <property type="match status" value="1"/>
</dbReference>
<dbReference type="HAMAP" id="MF_01595">
    <property type="entry name" value="PNPase"/>
    <property type="match status" value="1"/>
</dbReference>
<dbReference type="InterPro" id="IPR001247">
    <property type="entry name" value="ExoRNase_PH_dom1"/>
</dbReference>
<dbReference type="InterPro" id="IPR015847">
    <property type="entry name" value="ExoRNase_PH_dom2"/>
</dbReference>
<dbReference type="InterPro" id="IPR036345">
    <property type="entry name" value="ExoRNase_PH_dom2_sf"/>
</dbReference>
<dbReference type="InterPro" id="IPR004087">
    <property type="entry name" value="KH_dom"/>
</dbReference>
<dbReference type="InterPro" id="IPR004088">
    <property type="entry name" value="KH_dom_type_1"/>
</dbReference>
<dbReference type="InterPro" id="IPR036612">
    <property type="entry name" value="KH_dom_type_1_sf"/>
</dbReference>
<dbReference type="InterPro" id="IPR012340">
    <property type="entry name" value="NA-bd_OB-fold"/>
</dbReference>
<dbReference type="InterPro" id="IPR012162">
    <property type="entry name" value="PNPase"/>
</dbReference>
<dbReference type="InterPro" id="IPR027408">
    <property type="entry name" value="PNPase/RNase_PH_dom_sf"/>
</dbReference>
<dbReference type="InterPro" id="IPR015848">
    <property type="entry name" value="PNPase_PH_RNA-bd_bac/org-type"/>
</dbReference>
<dbReference type="InterPro" id="IPR020568">
    <property type="entry name" value="Ribosomal_Su5_D2-typ_SF"/>
</dbReference>
<dbReference type="InterPro" id="IPR003029">
    <property type="entry name" value="S1_domain"/>
</dbReference>
<dbReference type="NCBIfam" id="TIGR03591">
    <property type="entry name" value="polynuc_phos"/>
    <property type="match status" value="1"/>
</dbReference>
<dbReference type="NCBIfam" id="NF008805">
    <property type="entry name" value="PRK11824.1"/>
    <property type="match status" value="1"/>
</dbReference>
<dbReference type="PANTHER" id="PTHR11252">
    <property type="entry name" value="POLYRIBONUCLEOTIDE NUCLEOTIDYLTRANSFERASE"/>
    <property type="match status" value="1"/>
</dbReference>
<dbReference type="PANTHER" id="PTHR11252:SF0">
    <property type="entry name" value="POLYRIBONUCLEOTIDE NUCLEOTIDYLTRANSFERASE 1, MITOCHONDRIAL"/>
    <property type="match status" value="1"/>
</dbReference>
<dbReference type="Pfam" id="PF00013">
    <property type="entry name" value="KH_1"/>
    <property type="match status" value="1"/>
</dbReference>
<dbReference type="Pfam" id="PF03726">
    <property type="entry name" value="PNPase"/>
    <property type="match status" value="1"/>
</dbReference>
<dbReference type="Pfam" id="PF01138">
    <property type="entry name" value="RNase_PH"/>
    <property type="match status" value="2"/>
</dbReference>
<dbReference type="Pfam" id="PF03725">
    <property type="entry name" value="RNase_PH_C"/>
    <property type="match status" value="2"/>
</dbReference>
<dbReference type="Pfam" id="PF00575">
    <property type="entry name" value="S1"/>
    <property type="match status" value="1"/>
</dbReference>
<dbReference type="PIRSF" id="PIRSF005499">
    <property type="entry name" value="PNPase"/>
    <property type="match status" value="1"/>
</dbReference>
<dbReference type="SMART" id="SM00322">
    <property type="entry name" value="KH"/>
    <property type="match status" value="1"/>
</dbReference>
<dbReference type="SMART" id="SM00316">
    <property type="entry name" value="S1"/>
    <property type="match status" value="1"/>
</dbReference>
<dbReference type="SUPFAM" id="SSF54791">
    <property type="entry name" value="Eukaryotic type KH-domain (KH-domain type I)"/>
    <property type="match status" value="1"/>
</dbReference>
<dbReference type="SUPFAM" id="SSF50249">
    <property type="entry name" value="Nucleic acid-binding proteins"/>
    <property type="match status" value="1"/>
</dbReference>
<dbReference type="SUPFAM" id="SSF55666">
    <property type="entry name" value="Ribonuclease PH domain 2-like"/>
    <property type="match status" value="2"/>
</dbReference>
<dbReference type="SUPFAM" id="SSF54211">
    <property type="entry name" value="Ribosomal protein S5 domain 2-like"/>
    <property type="match status" value="2"/>
</dbReference>
<dbReference type="PROSITE" id="PS50084">
    <property type="entry name" value="KH_TYPE_1"/>
    <property type="match status" value="1"/>
</dbReference>
<dbReference type="PROSITE" id="PS50126">
    <property type="entry name" value="S1"/>
    <property type="match status" value="1"/>
</dbReference>
<comment type="function">
    <text evidence="1">Involved in mRNA degradation. Catalyzes the phosphorolysis of single-stranded polyribonucleotides processively in the 3'- to 5'-direction.</text>
</comment>
<comment type="catalytic activity">
    <reaction evidence="1">
        <text>RNA(n+1) + phosphate = RNA(n) + a ribonucleoside 5'-diphosphate</text>
        <dbReference type="Rhea" id="RHEA:22096"/>
        <dbReference type="Rhea" id="RHEA-COMP:14527"/>
        <dbReference type="Rhea" id="RHEA-COMP:17342"/>
        <dbReference type="ChEBI" id="CHEBI:43474"/>
        <dbReference type="ChEBI" id="CHEBI:57930"/>
        <dbReference type="ChEBI" id="CHEBI:140395"/>
        <dbReference type="EC" id="2.7.7.8"/>
    </reaction>
</comment>
<comment type="cofactor">
    <cofactor evidence="1">
        <name>Mg(2+)</name>
        <dbReference type="ChEBI" id="CHEBI:18420"/>
    </cofactor>
</comment>
<comment type="subcellular location">
    <subcellularLocation>
        <location evidence="1">Cytoplasm</location>
    </subcellularLocation>
</comment>
<comment type="similarity">
    <text evidence="1">Belongs to the polyribonucleotide nucleotidyltransferase family.</text>
</comment>
<name>PNP_WOLWR</name>
<protein>
    <recommendedName>
        <fullName evidence="1">Polyribonucleotide nucleotidyltransferase</fullName>
        <ecNumber evidence="1">2.7.7.8</ecNumber>
    </recommendedName>
    <alternativeName>
        <fullName evidence="1">Polynucleotide phosphorylase</fullName>
        <shortName evidence="1">PNPase</shortName>
    </alternativeName>
</protein>
<proteinExistence type="inferred from homology"/>
<feature type="chain" id="PRO_1000185763" description="Polyribonucleotide nucleotidyltransferase">
    <location>
        <begin position="1"/>
        <end position="757"/>
    </location>
</feature>
<feature type="domain" description="KH" evidence="1">
    <location>
        <begin position="549"/>
        <end position="608"/>
    </location>
</feature>
<feature type="domain" description="S1 motif" evidence="1">
    <location>
        <begin position="618"/>
        <end position="686"/>
    </location>
</feature>
<feature type="region of interest" description="Disordered" evidence="2">
    <location>
        <begin position="703"/>
        <end position="757"/>
    </location>
</feature>
<feature type="compositionally biased region" description="Basic and acidic residues" evidence="2">
    <location>
        <begin position="703"/>
        <end position="714"/>
    </location>
</feature>
<feature type="compositionally biased region" description="Basic residues" evidence="2">
    <location>
        <begin position="725"/>
        <end position="734"/>
    </location>
</feature>
<feature type="binding site" evidence="1">
    <location>
        <position position="482"/>
    </location>
    <ligand>
        <name>Mg(2+)</name>
        <dbReference type="ChEBI" id="CHEBI:18420"/>
    </ligand>
</feature>
<feature type="binding site" evidence="1">
    <location>
        <position position="488"/>
    </location>
    <ligand>
        <name>Mg(2+)</name>
        <dbReference type="ChEBI" id="CHEBI:18420"/>
    </ligand>
</feature>
<accession>C0R3T4</accession>
<reference key="1">
    <citation type="journal article" date="2009" name="Proc. Natl. Acad. Sci. U.S.A.">
        <title>The mosaic genome structure of the Wolbachia wRi strain infecting Drosophila simulans.</title>
        <authorList>
            <person name="Klasson L."/>
            <person name="Westberg J."/>
            <person name="Sapountzis P."/>
            <person name="Naeslund K."/>
            <person name="Lutnaes Y."/>
            <person name="Darby A.C."/>
            <person name="Veneti Z."/>
            <person name="Chen L."/>
            <person name="Braig H.R."/>
            <person name="Garrett R."/>
            <person name="Bourtzis K."/>
            <person name="Andersson S.G."/>
        </authorList>
    </citation>
    <scope>NUCLEOTIDE SEQUENCE [LARGE SCALE GENOMIC DNA]</scope>
    <source>
        <strain>wRi</strain>
    </source>
</reference>
<gene>
    <name evidence="1" type="primary">pnp</name>
    <name type="ordered locus">WRi_008390</name>
</gene>
<organism>
    <name type="scientific">Wolbachia sp. subsp. Drosophila simulans (strain wRi)</name>
    <dbReference type="NCBI Taxonomy" id="66084"/>
    <lineage>
        <taxon>Bacteria</taxon>
        <taxon>Pseudomonadati</taxon>
        <taxon>Pseudomonadota</taxon>
        <taxon>Alphaproteobacteria</taxon>
        <taxon>Rickettsiales</taxon>
        <taxon>Anaplasmataceae</taxon>
        <taxon>Wolbachieae</taxon>
        <taxon>Wolbachia</taxon>
    </lineage>
</organism>
<sequence>MFKIIKKSIEWGGRTLSLETGKIARQAHGSVVVNYGDTSVLVTVVSKKKEENVDFLPLNVQFIAKSYAMGKIPGGFFKREGKPSDRETLISRVIDRSIRPLFPEGFHDEISVVCNLLTYDTVNPPEVPALIGAVAALAISGVPFHFTIAGVMVGCDENNNYILNPSVQEMKASSLDLFLSGDENSILMVESEVKELSEENVFNAIKFGHEHLKPVIKLIKEFADTIGNKPESFAPIDASDITQELEKYGKDFEKAYSQTVKQERVQALEAIRENILNTLKETGKDEKLITYAVKNFERSLVREIIRKKSVRIDGRKHDEIRQIEVEVDILSKTHGSALFTRGNTQALVVTALGTTQDEQIVDDIEGDRREHFMLHYNFPSFAVGETSAARAPGRREIGHGKLAWKAIHPVLPDKSEFPYTIRVVSEILESDGSSSMATVCGTSLALMDTGVPIKAPVAGIAMGLIKDKDEYVILSDILGDEDYLGDMDFKVAGTSEGVTALQMDMKISGISFEIVEKSLEQAKAGRLHILEKMNAVISEHSDDVKDHAPRMLSFYIDKDKISAAIGSKGKNIRSVCERSNAKIEIGDDGKVSVFATSGTEAEIAKSMMIDSITELEQGSIVDVKVVRIEKSIVELEFLNGRKGKMHISEVANEHIDSIESVLKQDDTFKALVIDFEKGGCPKLSRRRVDQETGEFFEGELYNEERKDGPNDRDNYYNNSFSRKPGGSHHKRPPRPRSGFSNRNRPKFGNNDSSSGFY</sequence>